<dbReference type="EC" id="3.2.1.23" evidence="1"/>
<dbReference type="EMBL" id="CP001103">
    <property type="protein sequence ID" value="AEA96419.1"/>
    <property type="molecule type" value="Genomic_DNA"/>
</dbReference>
<dbReference type="RefSeq" id="WP_012516793.1">
    <property type="nucleotide sequence ID" value="NC_011138.3"/>
</dbReference>
<dbReference type="SMR" id="B4S2K9"/>
<dbReference type="CAZy" id="GH2">
    <property type="family name" value="Glycoside Hydrolase Family 2"/>
</dbReference>
<dbReference type="KEGG" id="amc:MADE_1001350"/>
<dbReference type="PATRIC" id="fig|314275.5.peg.278"/>
<dbReference type="HOGENOM" id="CLU_002346_0_2_6"/>
<dbReference type="Proteomes" id="UP000001870">
    <property type="component" value="Chromosome"/>
</dbReference>
<dbReference type="GO" id="GO:0009341">
    <property type="term" value="C:beta-galactosidase complex"/>
    <property type="evidence" value="ECO:0007669"/>
    <property type="project" value="InterPro"/>
</dbReference>
<dbReference type="GO" id="GO:0004565">
    <property type="term" value="F:beta-galactosidase activity"/>
    <property type="evidence" value="ECO:0007669"/>
    <property type="project" value="UniProtKB-EC"/>
</dbReference>
<dbReference type="GO" id="GO:0030246">
    <property type="term" value="F:carbohydrate binding"/>
    <property type="evidence" value="ECO:0007669"/>
    <property type="project" value="InterPro"/>
</dbReference>
<dbReference type="GO" id="GO:0000287">
    <property type="term" value="F:magnesium ion binding"/>
    <property type="evidence" value="ECO:0007669"/>
    <property type="project" value="UniProtKB-UniRule"/>
</dbReference>
<dbReference type="GO" id="GO:0005990">
    <property type="term" value="P:lactose catabolic process"/>
    <property type="evidence" value="ECO:0007669"/>
    <property type="project" value="TreeGrafter"/>
</dbReference>
<dbReference type="FunFam" id="3.20.20.80:FF:000018">
    <property type="entry name" value="Beta-galactosidase"/>
    <property type="match status" value="1"/>
</dbReference>
<dbReference type="Gene3D" id="2.70.98.10">
    <property type="match status" value="1"/>
</dbReference>
<dbReference type="Gene3D" id="2.60.120.260">
    <property type="entry name" value="Galactose-binding domain-like"/>
    <property type="match status" value="1"/>
</dbReference>
<dbReference type="Gene3D" id="3.20.20.80">
    <property type="entry name" value="Glycosidases"/>
    <property type="match status" value="1"/>
</dbReference>
<dbReference type="Gene3D" id="2.60.40.10">
    <property type="entry name" value="Immunoglobulins"/>
    <property type="match status" value="2"/>
</dbReference>
<dbReference type="HAMAP" id="MF_01687">
    <property type="entry name" value="Beta_gal"/>
    <property type="match status" value="1"/>
</dbReference>
<dbReference type="InterPro" id="IPR004199">
    <property type="entry name" value="B-gal_small/dom_5"/>
</dbReference>
<dbReference type="InterPro" id="IPR050347">
    <property type="entry name" value="Bact_Beta-galactosidase"/>
</dbReference>
<dbReference type="InterPro" id="IPR036156">
    <property type="entry name" value="Beta-gal/glucu_dom_sf"/>
</dbReference>
<dbReference type="InterPro" id="IPR011013">
    <property type="entry name" value="Gal_mutarotase_sf_dom"/>
</dbReference>
<dbReference type="InterPro" id="IPR008979">
    <property type="entry name" value="Galactose-bd-like_sf"/>
</dbReference>
<dbReference type="InterPro" id="IPR014718">
    <property type="entry name" value="GH-type_carb-bd"/>
</dbReference>
<dbReference type="InterPro" id="IPR006101">
    <property type="entry name" value="Glyco_hydro_2"/>
</dbReference>
<dbReference type="InterPro" id="IPR023232">
    <property type="entry name" value="Glyco_hydro_2_AS"/>
</dbReference>
<dbReference type="InterPro" id="IPR023933">
    <property type="entry name" value="Glyco_hydro_2_beta_Galsidase"/>
</dbReference>
<dbReference type="InterPro" id="IPR006103">
    <property type="entry name" value="Glyco_hydro_2_cat"/>
</dbReference>
<dbReference type="InterPro" id="IPR023230">
    <property type="entry name" value="Glyco_hydro_2_CS"/>
</dbReference>
<dbReference type="InterPro" id="IPR006102">
    <property type="entry name" value="Glyco_hydro_2_Ig-like"/>
</dbReference>
<dbReference type="InterPro" id="IPR006104">
    <property type="entry name" value="Glyco_hydro_2_N"/>
</dbReference>
<dbReference type="InterPro" id="IPR017853">
    <property type="entry name" value="Glycoside_hydrolase_SF"/>
</dbReference>
<dbReference type="InterPro" id="IPR013783">
    <property type="entry name" value="Ig-like_fold"/>
</dbReference>
<dbReference type="InterPro" id="IPR032312">
    <property type="entry name" value="LacZ_4"/>
</dbReference>
<dbReference type="NCBIfam" id="NF007074">
    <property type="entry name" value="PRK09525.1"/>
    <property type="match status" value="1"/>
</dbReference>
<dbReference type="PANTHER" id="PTHR46323">
    <property type="entry name" value="BETA-GALACTOSIDASE"/>
    <property type="match status" value="1"/>
</dbReference>
<dbReference type="PANTHER" id="PTHR46323:SF2">
    <property type="entry name" value="BETA-GALACTOSIDASE"/>
    <property type="match status" value="1"/>
</dbReference>
<dbReference type="Pfam" id="PF02929">
    <property type="entry name" value="Bgal_small_N"/>
    <property type="match status" value="1"/>
</dbReference>
<dbReference type="Pfam" id="PF00703">
    <property type="entry name" value="Glyco_hydro_2"/>
    <property type="match status" value="1"/>
</dbReference>
<dbReference type="Pfam" id="PF02836">
    <property type="entry name" value="Glyco_hydro_2_C"/>
    <property type="match status" value="1"/>
</dbReference>
<dbReference type="Pfam" id="PF02837">
    <property type="entry name" value="Glyco_hydro_2_N"/>
    <property type="match status" value="1"/>
</dbReference>
<dbReference type="Pfam" id="PF16353">
    <property type="entry name" value="LacZ_4"/>
    <property type="match status" value="1"/>
</dbReference>
<dbReference type="PRINTS" id="PR00132">
    <property type="entry name" value="GLHYDRLASE2"/>
</dbReference>
<dbReference type="SMART" id="SM01038">
    <property type="entry name" value="Bgal_small_N"/>
    <property type="match status" value="1"/>
</dbReference>
<dbReference type="SUPFAM" id="SSF51445">
    <property type="entry name" value="(Trans)glycosidases"/>
    <property type="match status" value="1"/>
</dbReference>
<dbReference type="SUPFAM" id="SSF49303">
    <property type="entry name" value="beta-Galactosidase/glucuronidase domain"/>
    <property type="match status" value="2"/>
</dbReference>
<dbReference type="SUPFAM" id="SSF74650">
    <property type="entry name" value="Galactose mutarotase-like"/>
    <property type="match status" value="1"/>
</dbReference>
<dbReference type="SUPFAM" id="SSF49785">
    <property type="entry name" value="Galactose-binding domain-like"/>
    <property type="match status" value="1"/>
</dbReference>
<dbReference type="PROSITE" id="PS00719">
    <property type="entry name" value="GLYCOSYL_HYDROL_F2_1"/>
    <property type="match status" value="1"/>
</dbReference>
<dbReference type="PROSITE" id="PS00608">
    <property type="entry name" value="GLYCOSYL_HYDROL_F2_2"/>
    <property type="match status" value="1"/>
</dbReference>
<comment type="catalytic activity">
    <reaction evidence="1">
        <text>Hydrolysis of terminal non-reducing beta-D-galactose residues in beta-D-galactosides.</text>
        <dbReference type="EC" id="3.2.1.23"/>
    </reaction>
</comment>
<comment type="cofactor">
    <cofactor evidence="1">
        <name>Mg(2+)</name>
        <dbReference type="ChEBI" id="CHEBI:18420"/>
    </cofactor>
    <text evidence="1">Binds 2 magnesium ions per monomer.</text>
</comment>
<comment type="cofactor">
    <cofactor evidence="1">
        <name>Na(+)</name>
        <dbReference type="ChEBI" id="CHEBI:29101"/>
    </cofactor>
    <text evidence="1">Binds 1 sodium ion per monomer.</text>
</comment>
<comment type="subunit">
    <text evidence="1">Homotetramer.</text>
</comment>
<comment type="similarity">
    <text evidence="1">Belongs to the glycosyl hydrolase 2 family.</text>
</comment>
<name>BGAL_ALTMD</name>
<keyword id="KW-0326">Glycosidase</keyword>
<keyword id="KW-0378">Hydrolase</keyword>
<keyword id="KW-0460">Magnesium</keyword>
<keyword id="KW-0479">Metal-binding</keyword>
<keyword id="KW-0915">Sodium</keyword>
<proteinExistence type="inferred from homology"/>
<sequence length="1041" mass="117714">MKTVAQIVAQNDWQNPVVFQRNRVGGHSPHHGYKTLEDALHNANAQKYLLNGEWDFCLFDAPEQVPESLLAATLSAEERAKWQSIVVPSNWQLKGYDKPIYCNVKYPFPVNPPIVPSENPTGCYRTTFSVTSAQLSQRNHIVFEGVNSAFHLWCNGEYVGYSQDSRLPAEFDISNLLVEGENRLAAMVIRWSDGSYLEDQDMWWLSGIFRDVSLITKPRQHIQDVFVTPTLDACYRDATVSVRTSIKAQLRCKVGIQLFDGDTTVTEQIVTGTNNKRVDEKGGWDDVVFQTLEVKEPKHWTAETPYLYRIVVSLIDDSGNVIDREAYNVGFRNVEMKNGQLLVNGKAVLIRGVNRHEHHQVKGHAINEDDMLEDIKLLKQNNFNAVRTAHYPNHPRWYELCDEYGLYVVDEANIETHGMFPMGRLSRDPLWAGAYMARFTQMVERDKNHPSIIIWSLGNECGHGPTHDAMYGWAKSFDPSRPVQYEGGGADTTATDIIAPMYARVDTDVEDDAVPKWAIKKWLSLPGENRPVILCEYAHAMGNSLGSFDEYWKAFKDYPRLQGGFIWDWVDQGLTKHTDSGDAFWAYGGDFGDTDNDRQFCINGLLFPDRTPHPHLFEAKYCQQHLSFSLTEETDKWQLSVKSDYLFRHTDNELLRWQVLENGKPIIEGECPIYVAPQQAQTVSIAPEINFKAGALYHLNIDVVLANDCAWAKAGHVIDTAQLALANKSGLIPFVSTANVANENAESGVTVKAENTTLLVSVKNNVFSFNSESGLLTSWLHEDSEMLSAPLEDNFFRAPLDNDIGVSEVDNPDPNAWESRWRRAGIGKWDRICTSVDVEQSTFDVRITSLFEYHYNDKLIAATKWVYTINHQAALTVEVEVLLDDSLPPMPRIGLQAAVPAPRSNEQERMRVTWQGLGPFENYPDRKAAARFGEHSLSIADLQTHYIFPTDNGLRSDCKQLNISGLRVNGQFCFSVSEYGQVQLDTAKHTSDLMPQDCVFVYIDHAHMGVGGDDSWSPSTHKAFLIEEKCYRYSVTFCAKV</sequence>
<reference key="1">
    <citation type="journal article" date="2008" name="ISME J.">
        <title>Comparative genomics of two ecotypes of the marine planktonic copiotroph Alteromonas macleodii suggests alternative lifestyles associated with different kinds of particulate organic matter.</title>
        <authorList>
            <person name="Ivars-Martinez E."/>
            <person name="Martin-Cuadrado A.-B."/>
            <person name="D'Auria G."/>
            <person name="Mira A."/>
            <person name="Ferriera S."/>
            <person name="Johnson J."/>
            <person name="Friedman R."/>
            <person name="Rodriguez-Valera F."/>
        </authorList>
    </citation>
    <scope>NUCLEOTIDE SEQUENCE [LARGE SCALE GENOMIC DNA]</scope>
    <source>
        <strain>DSM 17117 / CIP 110805 / LMG 28347 / Deep ecotype</strain>
    </source>
</reference>
<accession>B4S2K9</accession>
<accession>F2G3U0</accession>
<gene>
    <name evidence="1" type="primary">lacZ</name>
    <name type="ordered locus">MADE_1001350</name>
</gene>
<evidence type="ECO:0000255" key="1">
    <source>
        <dbReference type="HAMAP-Rule" id="MF_01687"/>
    </source>
</evidence>
<organism>
    <name type="scientific">Alteromonas mediterranea (strain DSM 17117 / CIP 110805 / LMG 28347 / Deep ecotype)</name>
    <dbReference type="NCBI Taxonomy" id="1774373"/>
    <lineage>
        <taxon>Bacteria</taxon>
        <taxon>Pseudomonadati</taxon>
        <taxon>Pseudomonadota</taxon>
        <taxon>Gammaproteobacteria</taxon>
        <taxon>Alteromonadales</taxon>
        <taxon>Alteromonadaceae</taxon>
        <taxon>Alteromonas/Salinimonas group</taxon>
        <taxon>Alteromonas</taxon>
    </lineage>
</organism>
<protein>
    <recommendedName>
        <fullName evidence="1">Beta-galactosidase</fullName>
        <shortName evidence="1">Beta-gal</shortName>
        <ecNumber evidence="1">3.2.1.23</ecNumber>
    </recommendedName>
    <alternativeName>
        <fullName evidence="1">Lactase</fullName>
    </alternativeName>
</protein>
<feature type="chain" id="PRO_0000366980" description="Beta-galactosidase">
    <location>
        <begin position="1"/>
        <end position="1041"/>
    </location>
</feature>
<feature type="active site" description="Proton donor" evidence="1">
    <location>
        <position position="460"/>
    </location>
</feature>
<feature type="active site" description="Nucleophile" evidence="1">
    <location>
        <position position="536"/>
    </location>
</feature>
<feature type="binding site" evidence="1">
    <location>
        <position position="103"/>
    </location>
    <ligand>
        <name>substrate</name>
    </ligand>
</feature>
<feature type="binding site" evidence="1">
    <location>
        <position position="201"/>
    </location>
    <ligand>
        <name>Na(+)</name>
        <dbReference type="ChEBI" id="CHEBI:29101"/>
    </ligand>
</feature>
<feature type="binding site" evidence="1">
    <location>
        <position position="201"/>
    </location>
    <ligand>
        <name>substrate</name>
    </ligand>
</feature>
<feature type="binding site" evidence="1">
    <location>
        <position position="415"/>
    </location>
    <ligand>
        <name>Mg(2+)</name>
        <dbReference type="ChEBI" id="CHEBI:18420"/>
        <label>1</label>
    </ligand>
</feature>
<feature type="binding site" evidence="1">
    <location>
        <position position="417"/>
    </location>
    <ligand>
        <name>Mg(2+)</name>
        <dbReference type="ChEBI" id="CHEBI:18420"/>
        <label>1</label>
    </ligand>
</feature>
<feature type="binding site" evidence="1">
    <location>
        <position position="460"/>
    </location>
    <ligand>
        <name>Mg(2+)</name>
        <dbReference type="ChEBI" id="CHEBI:18420"/>
        <label>1</label>
    </ligand>
</feature>
<feature type="binding site" evidence="1">
    <location>
        <position position="460"/>
    </location>
    <ligand>
        <name>substrate</name>
    </ligand>
</feature>
<feature type="binding site" evidence="1">
    <location>
        <begin position="536"/>
        <end position="539"/>
    </location>
    <ligand>
        <name>substrate</name>
    </ligand>
</feature>
<feature type="binding site" evidence="1">
    <location>
        <position position="596"/>
    </location>
    <ligand>
        <name>Mg(2+)</name>
        <dbReference type="ChEBI" id="CHEBI:18420"/>
        <label>2</label>
    </ligand>
</feature>
<feature type="binding site" evidence="1">
    <location>
        <position position="600"/>
    </location>
    <ligand>
        <name>Na(+)</name>
        <dbReference type="ChEBI" id="CHEBI:29101"/>
    </ligand>
</feature>
<feature type="binding site" evidence="1">
    <location>
        <position position="603"/>
    </location>
    <ligand>
        <name>Na(+)</name>
        <dbReference type="ChEBI" id="CHEBI:29101"/>
    </ligand>
</feature>
<feature type="binding site" evidence="1">
    <location>
        <position position="603"/>
    </location>
    <ligand>
        <name>substrate</name>
    </ligand>
</feature>
<feature type="binding site" evidence="1">
    <location>
        <position position="1016"/>
    </location>
    <ligand>
        <name>substrate</name>
    </ligand>
</feature>
<feature type="site" description="Transition state stabilizer" evidence="1">
    <location>
        <position position="356"/>
    </location>
</feature>
<feature type="site" description="Transition state stabilizer" evidence="1">
    <location>
        <position position="390"/>
    </location>
</feature>